<comment type="function">
    <text evidence="1">May bind long-chain fatty acids, such as palmitate, and may play a role in lipid transport or fatty acid metabolism.</text>
</comment>
<protein>
    <recommendedName>
        <fullName>DegV domain-containing protein UU190</fullName>
    </recommendedName>
</protein>
<accession>Q9PQV3</accession>
<keyword id="KW-0446">Lipid-binding</keyword>
<keyword id="KW-1185">Reference proteome</keyword>
<feature type="chain" id="PRO_0000209819" description="DegV domain-containing protein UU190">
    <location>
        <begin position="1"/>
        <end position="216"/>
    </location>
</feature>
<feature type="domain" description="DegV" evidence="3">
    <location>
        <begin position="1"/>
        <end position="215"/>
    </location>
</feature>
<feature type="binding site" evidence="2">
    <location>
        <position position="26"/>
    </location>
    <ligand>
        <name>hexadecanoate</name>
        <dbReference type="ChEBI" id="CHEBI:7896"/>
    </ligand>
</feature>
<proteinExistence type="inferred from homology"/>
<reference key="1">
    <citation type="journal article" date="2000" name="Nature">
        <title>The complete sequence of the mucosal pathogen Ureaplasma urealyticum.</title>
        <authorList>
            <person name="Glass J.I."/>
            <person name="Lefkowitz E.J."/>
            <person name="Glass J.S."/>
            <person name="Heiner C.R."/>
            <person name="Chen E.Y."/>
            <person name="Cassell G.H."/>
        </authorList>
    </citation>
    <scope>NUCLEOTIDE SEQUENCE [LARGE SCALE GENOMIC DNA]</scope>
    <source>
        <strain>ATCC 700970</strain>
    </source>
</reference>
<name>Y190_UREPA</name>
<evidence type="ECO:0000250" key="1"/>
<evidence type="ECO:0000250" key="2">
    <source>
        <dbReference type="UniProtKB" id="Q9X1H9"/>
    </source>
</evidence>
<evidence type="ECO:0000255" key="3">
    <source>
        <dbReference type="PROSITE-ProRule" id="PRU00815"/>
    </source>
</evidence>
<gene>
    <name type="ordered locus">UU190</name>
</gene>
<organism>
    <name type="scientific">Ureaplasma parvum serovar 3 (strain ATCC 700970)</name>
    <dbReference type="NCBI Taxonomy" id="273119"/>
    <lineage>
        <taxon>Bacteria</taxon>
        <taxon>Bacillati</taxon>
        <taxon>Mycoplasmatota</taxon>
        <taxon>Mycoplasmoidales</taxon>
        <taxon>Mycoplasmoidaceae</taxon>
        <taxon>Ureaplasma</taxon>
    </lineage>
</organism>
<dbReference type="EMBL" id="AF222894">
    <property type="protein sequence ID" value="AAF30597.1"/>
    <property type="molecule type" value="Genomic_DNA"/>
</dbReference>
<dbReference type="SMR" id="Q9PQV3"/>
<dbReference type="STRING" id="273119.UU190"/>
<dbReference type="EnsemblBacteria" id="AAF30597">
    <property type="protein sequence ID" value="AAF30597"/>
    <property type="gene ID" value="UU190"/>
</dbReference>
<dbReference type="KEGG" id="uur:UU190"/>
<dbReference type="PATRIC" id="fig|273119.6.peg.197"/>
<dbReference type="eggNOG" id="COG1307">
    <property type="taxonomic scope" value="Bacteria"/>
</dbReference>
<dbReference type="HOGENOM" id="CLU_048251_5_0_14"/>
<dbReference type="Proteomes" id="UP000000423">
    <property type="component" value="Chromosome"/>
</dbReference>
<dbReference type="GO" id="GO:0008289">
    <property type="term" value="F:lipid binding"/>
    <property type="evidence" value="ECO:0007669"/>
    <property type="project" value="UniProtKB-KW"/>
</dbReference>
<dbReference type="Gene3D" id="3.30.1180.10">
    <property type="match status" value="1"/>
</dbReference>
<dbReference type="Gene3D" id="3.40.50.10170">
    <property type="match status" value="1"/>
</dbReference>
<dbReference type="InterPro" id="IPR003797">
    <property type="entry name" value="DegV"/>
</dbReference>
<dbReference type="InterPro" id="IPR043168">
    <property type="entry name" value="DegV_C"/>
</dbReference>
<dbReference type="InterPro" id="IPR050270">
    <property type="entry name" value="DegV_domain_contain"/>
</dbReference>
<dbReference type="NCBIfam" id="TIGR00762">
    <property type="entry name" value="DegV"/>
    <property type="match status" value="1"/>
</dbReference>
<dbReference type="PANTHER" id="PTHR33434">
    <property type="entry name" value="DEGV DOMAIN-CONTAINING PROTEIN DR_1986-RELATED"/>
    <property type="match status" value="1"/>
</dbReference>
<dbReference type="PANTHER" id="PTHR33434:SF2">
    <property type="entry name" value="FATTY ACID-BINDING PROTEIN TM_1468"/>
    <property type="match status" value="1"/>
</dbReference>
<dbReference type="Pfam" id="PF02645">
    <property type="entry name" value="DegV"/>
    <property type="match status" value="1"/>
</dbReference>
<dbReference type="SUPFAM" id="SSF82549">
    <property type="entry name" value="DAK1/DegV-like"/>
    <property type="match status" value="1"/>
</dbReference>
<dbReference type="PROSITE" id="PS51482">
    <property type="entry name" value="DEGV"/>
    <property type="match status" value="1"/>
</dbReference>
<sequence length="216" mass="24513">MLWKNLDELFLKYDRVVILTLSSGLSSYFESLSIIKEDYKDKHLVCIDSRSVSIGILWLVDEINLLLKNNPSDEELISLVKQRSQKIIGGVIVNNLDQLIAGGRVKKTKGIIAKALRLKLIVRWNGQLDFMDKTPNLSTAIDKLLDIIDNQNHWRTNGIKNIAILTDLENESQINSLKTSLQEKIRQTIEIKISYLPGCIYAHVGLNNFAILIEAK</sequence>